<organism>
    <name type="scientific">Bacillus cereus (strain B4264)</name>
    <dbReference type="NCBI Taxonomy" id="405532"/>
    <lineage>
        <taxon>Bacteria</taxon>
        <taxon>Bacillati</taxon>
        <taxon>Bacillota</taxon>
        <taxon>Bacilli</taxon>
        <taxon>Bacillales</taxon>
        <taxon>Bacillaceae</taxon>
        <taxon>Bacillus</taxon>
        <taxon>Bacillus cereus group</taxon>
    </lineage>
</organism>
<sequence>MAKDIKFSEEARRSMLRGVDTLANAVKVTLGPKGRNVVLEKKFGSPLITNDGVTIAKEIELEDAFENMGAKLVAEVASKTNDVAGDGTTTATVLAQAMIREGLKNVTAGANPMGLRKGIEKAVTAAIEELKTISKPIEGKSSIAQVAAISAADEEVGQLIAEAMERVGNDGVITLEESKGFTTELDVVEGMQFDRGYASPYMITDSDKMEAVLDNPYILITDKKISNIQEILPVLEQVVQQGKPLLIIAEDVEGEALATLVVNKLRGTFNVVAVKAPGFGDRRKAMLEDIAILTGGEVITEELGRDLKSATVESLGRAGKVVVTKENTTVVEGVGSTEQIEARIGQIRAQLEETTSEFDREKLQERLAKLAGGVAVIKVGAATETELKERKLRIEDALNSTRAAVEEGIVAGGGTSLMNVYTKVASIVAEGDEATGINIVLRALEEPVRQIAINAGLEGSVVVERLKGEKVGVGFNAATGEWVNMLESGIVDPAKVTRSALQNAASVAAMFLTTEAVVADKPEPNAPAMPDMGGMGMGGMGGMM</sequence>
<protein>
    <recommendedName>
        <fullName evidence="1">Chaperonin GroEL</fullName>
        <ecNumber evidence="1">5.6.1.7</ecNumber>
    </recommendedName>
    <alternativeName>
        <fullName evidence="1">60 kDa chaperonin</fullName>
    </alternativeName>
    <alternativeName>
        <fullName evidence="1">Chaperonin-60</fullName>
        <shortName evidence="1">Cpn60</shortName>
    </alternativeName>
</protein>
<gene>
    <name evidence="1" type="primary">groEL</name>
    <name evidence="1" type="synonym">groL</name>
    <name type="ordered locus">BCB4264_A0298</name>
</gene>
<keyword id="KW-0067">ATP-binding</keyword>
<keyword id="KW-0143">Chaperone</keyword>
<keyword id="KW-0963">Cytoplasm</keyword>
<keyword id="KW-0413">Isomerase</keyword>
<keyword id="KW-0547">Nucleotide-binding</keyword>
<evidence type="ECO:0000255" key="1">
    <source>
        <dbReference type="HAMAP-Rule" id="MF_00600"/>
    </source>
</evidence>
<proteinExistence type="inferred from homology"/>
<comment type="function">
    <text evidence="1">Together with its co-chaperonin GroES, plays an essential role in assisting protein folding. The GroEL-GroES system forms a nano-cage that allows encapsulation of the non-native substrate proteins and provides a physical environment optimized to promote and accelerate protein folding.</text>
</comment>
<comment type="catalytic activity">
    <reaction evidence="1">
        <text>ATP + H2O + a folded polypeptide = ADP + phosphate + an unfolded polypeptide.</text>
        <dbReference type="EC" id="5.6.1.7"/>
    </reaction>
</comment>
<comment type="subunit">
    <text evidence="1">Forms a cylinder of 14 subunits composed of two heptameric rings stacked back-to-back. Interacts with the co-chaperonin GroES.</text>
</comment>
<comment type="subcellular location">
    <subcellularLocation>
        <location evidence="1">Cytoplasm</location>
    </subcellularLocation>
</comment>
<comment type="similarity">
    <text evidence="1">Belongs to the chaperonin (HSP60) family.</text>
</comment>
<name>CH60_BACC4</name>
<reference key="1">
    <citation type="submission" date="2008-10" db="EMBL/GenBank/DDBJ databases">
        <title>Genome sequence of Bacillus cereus B4264.</title>
        <authorList>
            <person name="Dodson R.J."/>
            <person name="Durkin A.S."/>
            <person name="Rosovitz M.J."/>
            <person name="Rasko D.A."/>
            <person name="Hoffmaster A."/>
            <person name="Ravel J."/>
            <person name="Sutton G."/>
        </authorList>
    </citation>
    <scope>NUCLEOTIDE SEQUENCE [LARGE SCALE GENOMIC DNA]</scope>
    <source>
        <strain>B4264</strain>
    </source>
</reference>
<feature type="chain" id="PRO_1000129973" description="Chaperonin GroEL">
    <location>
        <begin position="1"/>
        <end position="544"/>
    </location>
</feature>
<feature type="binding site" evidence="1">
    <location>
        <begin position="29"/>
        <end position="32"/>
    </location>
    <ligand>
        <name>ATP</name>
        <dbReference type="ChEBI" id="CHEBI:30616"/>
    </ligand>
</feature>
<feature type="binding site" evidence="1">
    <location>
        <begin position="86"/>
        <end position="90"/>
    </location>
    <ligand>
        <name>ATP</name>
        <dbReference type="ChEBI" id="CHEBI:30616"/>
    </ligand>
</feature>
<feature type="binding site" evidence="1">
    <location>
        <position position="413"/>
    </location>
    <ligand>
        <name>ATP</name>
        <dbReference type="ChEBI" id="CHEBI:30616"/>
    </ligand>
</feature>
<feature type="binding site" evidence="1">
    <location>
        <begin position="476"/>
        <end position="478"/>
    </location>
    <ligand>
        <name>ATP</name>
        <dbReference type="ChEBI" id="CHEBI:30616"/>
    </ligand>
</feature>
<feature type="binding site" evidence="1">
    <location>
        <position position="492"/>
    </location>
    <ligand>
        <name>ATP</name>
        <dbReference type="ChEBI" id="CHEBI:30616"/>
    </ligand>
</feature>
<accession>B7H4Q7</accession>
<dbReference type="EC" id="5.6.1.7" evidence="1"/>
<dbReference type="EMBL" id="CP001176">
    <property type="protein sequence ID" value="ACK63042.1"/>
    <property type="molecule type" value="Genomic_DNA"/>
</dbReference>
<dbReference type="RefSeq" id="WP_001029993.1">
    <property type="nucleotide sequence ID" value="NZ_VEHB01000024.1"/>
</dbReference>
<dbReference type="SMR" id="B7H4Q7"/>
<dbReference type="KEGG" id="bcb:BCB4264_A0298"/>
<dbReference type="HOGENOM" id="CLU_016503_3_0_9"/>
<dbReference type="Proteomes" id="UP000007096">
    <property type="component" value="Chromosome"/>
</dbReference>
<dbReference type="GO" id="GO:0005737">
    <property type="term" value="C:cytoplasm"/>
    <property type="evidence" value="ECO:0007669"/>
    <property type="project" value="UniProtKB-SubCell"/>
</dbReference>
<dbReference type="GO" id="GO:0005524">
    <property type="term" value="F:ATP binding"/>
    <property type="evidence" value="ECO:0007669"/>
    <property type="project" value="UniProtKB-UniRule"/>
</dbReference>
<dbReference type="GO" id="GO:0140662">
    <property type="term" value="F:ATP-dependent protein folding chaperone"/>
    <property type="evidence" value="ECO:0007669"/>
    <property type="project" value="InterPro"/>
</dbReference>
<dbReference type="GO" id="GO:0016853">
    <property type="term" value="F:isomerase activity"/>
    <property type="evidence" value="ECO:0007669"/>
    <property type="project" value="UniProtKB-KW"/>
</dbReference>
<dbReference type="GO" id="GO:0051082">
    <property type="term" value="F:unfolded protein binding"/>
    <property type="evidence" value="ECO:0007669"/>
    <property type="project" value="UniProtKB-UniRule"/>
</dbReference>
<dbReference type="GO" id="GO:0042026">
    <property type="term" value="P:protein refolding"/>
    <property type="evidence" value="ECO:0007669"/>
    <property type="project" value="UniProtKB-UniRule"/>
</dbReference>
<dbReference type="CDD" id="cd03344">
    <property type="entry name" value="GroEL"/>
    <property type="match status" value="1"/>
</dbReference>
<dbReference type="FunFam" id="1.10.560.10:FF:000001">
    <property type="entry name" value="60 kDa chaperonin"/>
    <property type="match status" value="1"/>
</dbReference>
<dbReference type="FunFam" id="3.50.7.10:FF:000001">
    <property type="entry name" value="60 kDa chaperonin"/>
    <property type="match status" value="1"/>
</dbReference>
<dbReference type="Gene3D" id="3.50.7.10">
    <property type="entry name" value="GroEL"/>
    <property type="match status" value="1"/>
</dbReference>
<dbReference type="Gene3D" id="1.10.560.10">
    <property type="entry name" value="GroEL-like equatorial domain"/>
    <property type="match status" value="1"/>
</dbReference>
<dbReference type="Gene3D" id="3.30.260.10">
    <property type="entry name" value="TCP-1-like chaperonin intermediate domain"/>
    <property type="match status" value="1"/>
</dbReference>
<dbReference type="HAMAP" id="MF_00600">
    <property type="entry name" value="CH60"/>
    <property type="match status" value="1"/>
</dbReference>
<dbReference type="InterPro" id="IPR018370">
    <property type="entry name" value="Chaperonin_Cpn60_CS"/>
</dbReference>
<dbReference type="InterPro" id="IPR001844">
    <property type="entry name" value="Cpn60/GroEL"/>
</dbReference>
<dbReference type="InterPro" id="IPR002423">
    <property type="entry name" value="Cpn60/GroEL/TCP-1"/>
</dbReference>
<dbReference type="InterPro" id="IPR027409">
    <property type="entry name" value="GroEL-like_apical_dom_sf"/>
</dbReference>
<dbReference type="InterPro" id="IPR027413">
    <property type="entry name" value="GROEL-like_equatorial_sf"/>
</dbReference>
<dbReference type="InterPro" id="IPR027410">
    <property type="entry name" value="TCP-1-like_intermed_sf"/>
</dbReference>
<dbReference type="NCBIfam" id="TIGR02348">
    <property type="entry name" value="GroEL"/>
    <property type="match status" value="1"/>
</dbReference>
<dbReference type="NCBIfam" id="NF000592">
    <property type="entry name" value="PRK00013.1"/>
    <property type="match status" value="1"/>
</dbReference>
<dbReference type="NCBIfam" id="NF009487">
    <property type="entry name" value="PRK12849.1"/>
    <property type="match status" value="1"/>
</dbReference>
<dbReference type="NCBIfam" id="NF009488">
    <property type="entry name" value="PRK12850.1"/>
    <property type="match status" value="1"/>
</dbReference>
<dbReference type="NCBIfam" id="NF009489">
    <property type="entry name" value="PRK12851.1"/>
    <property type="match status" value="1"/>
</dbReference>
<dbReference type="PANTHER" id="PTHR45633">
    <property type="entry name" value="60 KDA HEAT SHOCK PROTEIN, MITOCHONDRIAL"/>
    <property type="match status" value="1"/>
</dbReference>
<dbReference type="Pfam" id="PF00118">
    <property type="entry name" value="Cpn60_TCP1"/>
    <property type="match status" value="1"/>
</dbReference>
<dbReference type="PRINTS" id="PR00298">
    <property type="entry name" value="CHAPERONIN60"/>
</dbReference>
<dbReference type="SUPFAM" id="SSF52029">
    <property type="entry name" value="GroEL apical domain-like"/>
    <property type="match status" value="1"/>
</dbReference>
<dbReference type="SUPFAM" id="SSF48592">
    <property type="entry name" value="GroEL equatorial domain-like"/>
    <property type="match status" value="1"/>
</dbReference>
<dbReference type="SUPFAM" id="SSF54849">
    <property type="entry name" value="GroEL-intermediate domain like"/>
    <property type="match status" value="1"/>
</dbReference>
<dbReference type="PROSITE" id="PS00296">
    <property type="entry name" value="CHAPERONINS_CPN60"/>
    <property type="match status" value="1"/>
</dbReference>